<name>ENV_RSVSA</name>
<dbReference type="EMBL" id="V01169">
    <property type="protein sequence ID" value="CAA24494.1"/>
    <property type="molecule type" value="Genomic_RNA"/>
</dbReference>
<dbReference type="EMBL" id="L29199">
    <property type="protein sequence ID" value="AAA42562.1"/>
    <property type="molecule type" value="Genomic_DNA"/>
</dbReference>
<dbReference type="PIR" id="B38017">
    <property type="entry name" value="VCFV37"/>
</dbReference>
<dbReference type="PDB" id="1XNL">
    <property type="method" value="NMR"/>
    <property type="chains" value="A=58-85"/>
</dbReference>
<dbReference type="PDBsum" id="1XNL"/>
<dbReference type="SMR" id="P0DTM5"/>
<dbReference type="GO" id="GO:0020002">
    <property type="term" value="C:host cell plasma membrane"/>
    <property type="evidence" value="ECO:0007669"/>
    <property type="project" value="UniProtKB-SubCell"/>
</dbReference>
<dbReference type="GO" id="GO:0016020">
    <property type="term" value="C:membrane"/>
    <property type="evidence" value="ECO:0007669"/>
    <property type="project" value="UniProtKB-KW"/>
</dbReference>
<dbReference type="GO" id="GO:0019031">
    <property type="term" value="C:viral envelope"/>
    <property type="evidence" value="ECO:0007669"/>
    <property type="project" value="UniProtKB-KW"/>
</dbReference>
<dbReference type="GO" id="GO:0055036">
    <property type="term" value="C:virion membrane"/>
    <property type="evidence" value="ECO:0007669"/>
    <property type="project" value="UniProtKB-SubCell"/>
</dbReference>
<dbReference type="GO" id="GO:0019064">
    <property type="term" value="P:fusion of virus membrane with host plasma membrane"/>
    <property type="evidence" value="ECO:0007669"/>
    <property type="project" value="UniProtKB-KW"/>
</dbReference>
<dbReference type="GO" id="GO:0046718">
    <property type="term" value="P:symbiont entry into host cell"/>
    <property type="evidence" value="ECO:0007669"/>
    <property type="project" value="UniProtKB-KW"/>
</dbReference>
<dbReference type="GO" id="GO:0019062">
    <property type="term" value="P:virion attachment to host cell"/>
    <property type="evidence" value="ECO:0007669"/>
    <property type="project" value="UniProtKB-KW"/>
</dbReference>
<dbReference type="CDD" id="cd09949">
    <property type="entry name" value="RSV-like_HR1-HR2"/>
    <property type="match status" value="1"/>
</dbReference>
<dbReference type="Gene3D" id="1.10.287.210">
    <property type="match status" value="1"/>
</dbReference>
<dbReference type="InterPro" id="IPR005166">
    <property type="entry name" value="RSV_p95_env"/>
</dbReference>
<dbReference type="InterPro" id="IPR018154">
    <property type="entry name" value="TLV/ENV_coat_polyprotein"/>
</dbReference>
<dbReference type="PANTHER" id="PTHR10424:SF81">
    <property type="entry name" value="ERVV2 PROTEIN"/>
    <property type="match status" value="1"/>
</dbReference>
<dbReference type="PANTHER" id="PTHR10424">
    <property type="entry name" value="VIRAL ENVELOPE PROTEIN"/>
    <property type="match status" value="1"/>
</dbReference>
<dbReference type="Pfam" id="PF03708">
    <property type="entry name" value="Avian_gp85"/>
    <property type="match status" value="1"/>
</dbReference>
<dbReference type="Pfam" id="PF00429">
    <property type="entry name" value="TLV_coat"/>
    <property type="match status" value="1"/>
</dbReference>
<dbReference type="SUPFAM" id="SSF58069">
    <property type="entry name" value="Virus ectodomain"/>
    <property type="match status" value="1"/>
</dbReference>
<evidence type="ECO:0000250" key="1"/>
<evidence type="ECO:0000250" key="2">
    <source>
        <dbReference type="UniProtKB" id="P03396"/>
    </source>
</evidence>
<evidence type="ECO:0000250" key="3">
    <source>
        <dbReference type="UniProtKB" id="P0DTM4"/>
    </source>
</evidence>
<evidence type="ECO:0000255" key="4"/>
<evidence type="ECO:0000269" key="5">
    <source>
    </source>
</evidence>
<evidence type="ECO:0000269" key="6">
    <source>
    </source>
</evidence>
<evidence type="ECO:0000269" key="7">
    <source>
    </source>
</evidence>
<evidence type="ECO:0000303" key="8">
    <source>
    </source>
</evidence>
<evidence type="ECO:0000305" key="9"/>
<evidence type="ECO:0000305" key="10">
    <source>
    </source>
</evidence>
<evidence type="ECO:0007744" key="11">
    <source>
        <dbReference type="PDB" id="1XNL"/>
    </source>
</evidence>
<keyword id="KW-0002">3D-structure</keyword>
<keyword id="KW-0165">Cleavage on pair of basic residues</keyword>
<keyword id="KW-0175">Coiled coil</keyword>
<keyword id="KW-1015">Disulfide bond</keyword>
<keyword id="KW-1169">Fusion of virus membrane with host cell membrane</keyword>
<keyword id="KW-1168">Fusion of virus membrane with host membrane</keyword>
<keyword id="KW-0325">Glycoprotein</keyword>
<keyword id="KW-1032">Host cell membrane</keyword>
<keyword id="KW-1043">Host membrane</keyword>
<keyword id="KW-0945">Host-virus interaction</keyword>
<keyword id="KW-0449">Lipoprotein</keyword>
<keyword id="KW-0472">Membrane</keyword>
<keyword id="KW-0564">Palmitate</keyword>
<keyword id="KW-0812">Transmembrane</keyword>
<keyword id="KW-1133">Transmembrane helix</keyword>
<keyword id="KW-1161">Viral attachment to host cell</keyword>
<keyword id="KW-0261">Viral envelope protein</keyword>
<keyword id="KW-1162">Viral penetration into host cytoplasm</keyword>
<keyword id="KW-0946">Virion</keyword>
<keyword id="KW-1160">Virus entry into host cell</keyword>
<protein>
    <recommendedName>
        <fullName>Envelope glycoprotein gp95</fullName>
    </recommendedName>
    <alternativeName>
        <fullName>Env polyprotein</fullName>
    </alternativeName>
    <component>
        <recommendedName>
            <fullName>Surface protein</fullName>
            <shortName>SU</shortName>
        </recommendedName>
        <alternativeName>
            <fullName>Glycoprotein 85</fullName>
            <shortName>gp85</shortName>
        </alternativeName>
    </component>
    <component>
        <recommendedName>
            <fullName>Transmembrane protein</fullName>
            <shortName>TM</shortName>
        </recommendedName>
        <alternativeName>
            <fullName>Glycoprotein 37</fullName>
            <shortName>gp37</shortName>
        </alternativeName>
    </component>
</protein>
<organism>
    <name type="scientific">Rous sarcoma virus subgroup A (strain Schmidt-Ruppin)</name>
    <name type="common">RSV-SR-A</name>
    <dbReference type="NCBI Taxonomy" id="269446"/>
    <lineage>
        <taxon>Viruses</taxon>
        <taxon>Riboviria</taxon>
        <taxon>Pararnavirae</taxon>
        <taxon>Artverviricota</taxon>
        <taxon>Revtraviricetes</taxon>
        <taxon>Ortervirales</taxon>
        <taxon>Retroviridae</taxon>
        <taxon>Orthoretrovirinae</taxon>
        <taxon>Alpharetrovirus</taxon>
        <taxon>Rous sarcoma virus</taxon>
    </lineage>
</organism>
<accession>P0DTM5</accession>
<accession>P03397</accession>
<accession>Q03803</accession>
<accession>Q85500</accession>
<feature type="chain" id="PRO_0000457350" description="Envelope glycoprotein gp95">
    <location>
        <begin position="1" status="less than"/>
        <end position="246"/>
    </location>
</feature>
<feature type="chain" id="PRO_0000457351" description="Surface protein" evidence="1">
    <location>
        <begin position="1" status="less than"/>
        <end position="41"/>
    </location>
</feature>
<feature type="chain" id="PRO_0000457352" description="Transmembrane protein" evidence="1">
    <location>
        <begin position="42"/>
        <end position="246"/>
    </location>
</feature>
<feature type="topological domain" description="Extracellular" evidence="4">
    <location>
        <begin position="1" status="less than"/>
        <end position="192"/>
    </location>
</feature>
<feature type="transmembrane region" description="Helical" evidence="4">
    <location>
        <begin position="193"/>
        <end position="213"/>
    </location>
</feature>
<feature type="topological domain" description="Cytoplasmic" evidence="4">
    <location>
        <begin position="214"/>
        <end position="246"/>
    </location>
</feature>
<feature type="region of interest" description="Fusion peptide" evidence="3">
    <location>
        <begin position="58"/>
        <end position="78"/>
    </location>
</feature>
<feature type="region of interest" description="Immunosuppression" evidence="1">
    <location>
        <begin position="114"/>
        <end position="130"/>
    </location>
</feature>
<feature type="coiled-coil region" evidence="4">
    <location>
        <begin position="75"/>
        <end position="125"/>
    </location>
</feature>
<feature type="coiled-coil region" evidence="4">
    <location>
        <begin position="143"/>
        <end position="173"/>
    </location>
</feature>
<feature type="site" description="Cleavage; by host" evidence="2">
    <location>
        <begin position="41"/>
        <end position="42"/>
    </location>
</feature>
<feature type="lipid moiety-binding region" description="S-palmitoyl cysteine; by host" evidence="1">
    <location>
        <position position="205"/>
    </location>
</feature>
<feature type="lipid moiety-binding region" description="S-palmitoyl cysteine; by host" evidence="1">
    <location>
        <position position="208"/>
    </location>
</feature>
<feature type="glycosylation site" description="N-linked (GlcNAc...) asparagine; by host" evidence="4">
    <location>
        <position position="31"/>
    </location>
</feature>
<feature type="glycosylation site" description="N-linked (GlcNAc...) asparagine; by host" evidence="4">
    <location>
        <position position="93"/>
    </location>
</feature>
<feature type="glycosylation site" description="N-linked (GlcNAc...) asparagine; by host" evidence="4">
    <location>
        <position position="141"/>
    </location>
</feature>
<feature type="disulfide bond" evidence="3">
    <location>
        <begin position="50"/>
        <end position="86"/>
    </location>
</feature>
<feature type="disulfide bond" evidence="3">
    <location>
        <begin position="131"/>
        <end position="138"/>
    </location>
</feature>
<feature type="non-terminal residue">
    <location>
        <position position="1"/>
    </location>
</feature>
<gene>
    <name type="primary">env</name>
</gene>
<organismHost>
    <name type="scientific">Gallus gallus</name>
    <name type="common">Chicken</name>
    <dbReference type="NCBI Taxonomy" id="9031"/>
</organismHost>
<proteinExistence type="evidence at protein level"/>
<comment type="function">
    <molecule>Surface protein</molecule>
    <text evidence="3 6 7">The surface protein (SU) attaches the virus to the host cell entry receptor TVA (PubMed:15731243, PubMed:22099981). This interaction triggers the refolding of the transmembrane protein (TM) thereby unmasking its fusion peptide and the formation of a reactive thiolate to activate its fusogenic potential. Fusion occurs at the host cell plasma membrane (By similarity).</text>
</comment>
<comment type="function">
    <molecule>Transmembrane protein</molecule>
    <text evidence="5 10">The transmembrane protein (TM) acts as a class I viral fusion protein. Under the current model, the protein has at least 3 conformational states: pre-fusion native state, pre-hairpin intermediate state, and post-fusion hairpin state. During viral and target cell membrane fusion, the coiled coil regions (heptad repeats) assume a trimer-of-hairpins structure, positioning the fusion peptide in close proximity to the C-terminal region of the ectodomain. The formation of this structure appears to drive apposition and subsequent fusion of viral and target cell membranes. Membranes fusion leads to delivery of the nucleocapsid into the cytoplasm.</text>
</comment>
<comment type="subunit">
    <molecule>Surface protein</molecule>
    <text evidence="3 6 7">Heterodimer with the transmembrane protein. The mature envelope protein (Env) consists of a trimer of SU-TM heterodimers attached by a labile interchain disulfide bond (By similarity). Interacts with the host cell entry receptor TVA isoforms pg900 and pg800; this interaction allows the viral attachment (PubMed:15731243, PubMed:22099981).</text>
</comment>
<comment type="subunit">
    <molecule>Transmembrane protein</molecule>
    <text evidence="3">Heterodimer with the surface protein. The mature envelope protein (Env) consists of a trimer of SU-TM heterodimers attached by a labile interchain disulfide bond.</text>
</comment>
<comment type="subcellular location">
    <molecule>Transmembrane protein</molecule>
    <subcellularLocation>
        <location evidence="9">Virion membrane</location>
        <topology evidence="8">Single-pass type I membrane protein</topology>
    </subcellularLocation>
    <subcellularLocation>
        <location evidence="9">Host cell membrane</location>
        <topology evidence="8">Single-pass type I membrane protein</topology>
    </subcellularLocation>
</comment>
<comment type="subcellular location">
    <molecule>Surface protein</molecule>
    <subcellularLocation>
        <location evidence="9">Virion membrane</location>
        <topology>Peripheral membrane protein</topology>
    </subcellularLocation>
    <subcellularLocation>
        <location evidence="9">Host cell membrane</location>
        <topology>Peripheral membrane protein</topology>
    </subcellularLocation>
    <text evidence="1">The surface protein is not anchored to the viral envelope, but associates with the extravirion surface through its binding to TM. Both proteins are thought to be concentrated at the site of budding and incorporated into the virions possibly by contacts between the cytoplasmic tail of Env and the N-terminus of Gag (By similarity).</text>
</comment>
<comment type="domain">
    <molecule>Envelope glycoprotein gp95</molecule>
    <text evidence="1">The 17 amino acids long immunosuppressive region is present in many retroviral envelope proteins. Synthetic peptides derived from this relatively conserved sequence inhibit immune function in vitro and in vivo (By similarity).</text>
</comment>
<comment type="PTM">
    <molecule>Envelope glycoprotein gp95</molecule>
    <text evidence="1">Specific enzymatic cleavages in vivo yield mature proteins. Envelope glycoproteins are synthesized as an inactive precursor that is N-glycosylated and processed likely by host cell furin or by a furin-like protease in the Golgi to yield the mature SU and TM proteins. The cleavage site between SU and TM requires the minimal sequence [KR]-X-[KR]-R (By similarity).</text>
</comment>
<comment type="PTM">
    <molecule>Transmembrane protein</molecule>
    <text evidence="2">The transmembrane protein is palmitoylated. Palmitoylation is necessary for glycoprotein function and infectivity.</text>
</comment>
<comment type="similarity">
    <text evidence="9">Belongs to the Alpharetroviruses envelope glycoprotein family.</text>
</comment>
<reference key="1">
    <citation type="journal article" date="1980" name="Nature">
        <title>Nucleotide sequence of an avian sarcoma virus oncogene (src) and proposed amino acid sequence for gene product.</title>
        <authorList>
            <person name="Czernilofsky A.P."/>
            <person name="Levinson A.D."/>
            <person name="Varmus H.E."/>
            <person name="Bishop J.M."/>
            <person name="Tischer E."/>
            <person name="Goodman H.M."/>
        </authorList>
    </citation>
    <scope>NUCLEOTIDE SEQUENCE [GENOMIC RNA]</scope>
</reference>
<reference key="2">
    <citation type="journal article" date="1983" name="Nature">
        <title>Corrections to the nucleotide sequence of the src gene of Rous sarcoma virus.</title>
        <authorList>
            <person name="Czernilofsky A.P."/>
            <person name="Levinson A.D."/>
            <person name="Varmus H.E."/>
            <person name="Bishop J.M."/>
            <person name="Tischer E."/>
            <person name="Goodman H."/>
        </authorList>
    </citation>
    <scope>SEQUENCE REVISION</scope>
</reference>
<reference key="3">
    <citation type="journal article" date="2005" name="J. Virol.">
        <title>Receptor-induced conformational changes in the SU subunit of the avian sarcoma/leukosis virus A envelope protein: implications for fusion activation.</title>
        <authorList>
            <person name="Delos S.E."/>
            <person name="Godby J.A."/>
            <person name="White J.M."/>
        </authorList>
    </citation>
    <scope>FUNCTION</scope>
    <scope>INTERACTION WITH HOST RECEPTOR TVA ISOFORM PG950 (SURFACE PROTEIN)</scope>
</reference>
<reference key="4">
    <citation type="journal article" date="2011" name="Retrovirology">
        <title>Binding of more than one Tva800 molecule is required for ASLV-A entry.</title>
        <authorList>
            <person name="Gray E.R."/>
            <person name="Illingworth C.J."/>
            <person name="Coffin J.M."/>
            <person name="Stoye J.P."/>
        </authorList>
    </citation>
    <scope>FUNCTION</scope>
    <scope>INTERACTION WITH HOST RECEPTOR TVA ISOFORM PG800 (SURFACE PROTEIN)</scope>
</reference>
<reference key="5">
    <citation type="journal article" date="2019" name="Viruses">
        <title>Reverse Engineering Provides Insights on the Evolution of Subgroups A to E Avian Sarcoma and Leukosis Virus Receptor Specificity.</title>
        <authorList>
            <person name="Federspiel M.J."/>
        </authorList>
    </citation>
    <scope>REVIEW</scope>
</reference>
<reference evidence="11" key="6">
    <citation type="journal article" date="2004" name="Eur. J. Biochem.">
        <title>Structure and membrane interaction of the internal fusion peptide of avian sarcoma leukosis virus.</title>
        <authorList>
            <person name="Cheng S.F."/>
            <person name="Wu C.W."/>
            <person name="Kantchev E.A."/>
            <person name="Chang D.K."/>
        </authorList>
    </citation>
    <scope>STRUCTURE BY NMR OF 58-85</scope>
    <scope>FUNCTION (TRANSMEMBRANE PROTEIN)</scope>
</reference>
<sequence>IPSRPVGGPCYLGKLTMLAPKHTDILKVLVNSSRTGIRRKRSTSHLDDTCSDEVQLWGPTARIFASILAPGVAAAQALREIERLACWSVKQANLTTSLLGDLLDDVTSIRHAVLQNRAAIDFLLLAHGHGCEDVAGMCCFNLSDQSESIQKKFQLMKEHVNKIGVDSDLIGSWLRGLFGGIGEWAVHLLKGLLLGLVVILLLVVCLPCLLQMLCGNRRKMINNSISYHTEYKKLQKACGQPESRIV</sequence>